<keyword id="KW-1185">Reference proteome</keyword>
<keyword id="KW-0732">Signal</keyword>
<evidence type="ECO:0000255" key="1"/>
<gene>
    <name type="primary">tag-209</name>
    <name type="ORF">R06F6.11</name>
</gene>
<sequence>MLKLLAFVALLSVSVSANVDMTGFGLPADNHKVALGGPIQESAGLADEGEQQLQLVDVSPQDEGQQNVAHVREMFSNVFNSIKTQREQAMAANGSQPTD</sequence>
<dbReference type="EMBL" id="Z46794">
    <property type="protein sequence ID" value="CAA86781.1"/>
    <property type="molecule type" value="Genomic_DNA"/>
</dbReference>
<dbReference type="PIR" id="T23982">
    <property type="entry name" value="T23982"/>
</dbReference>
<dbReference type="RefSeq" id="NP_496321.1">
    <property type="nucleotide sequence ID" value="NM_063920.7"/>
</dbReference>
<dbReference type="BioGRID" id="39973">
    <property type="interactions" value="1"/>
</dbReference>
<dbReference type="FunCoup" id="Q09418">
    <property type="interactions" value="64"/>
</dbReference>
<dbReference type="IntAct" id="Q09418">
    <property type="interactions" value="1"/>
</dbReference>
<dbReference type="STRING" id="6239.R06F6.11.1"/>
<dbReference type="PaxDb" id="6239-R06F6.11"/>
<dbReference type="PeptideAtlas" id="Q09418"/>
<dbReference type="EnsemblMetazoa" id="R06F6.11.1">
    <property type="protein sequence ID" value="R06F6.11.1"/>
    <property type="gene ID" value="WBGene00011072"/>
</dbReference>
<dbReference type="GeneID" id="174660"/>
<dbReference type="KEGG" id="cel:CELE_R06F6.11"/>
<dbReference type="UCSC" id="R06F6.11.1">
    <property type="organism name" value="c. elegans"/>
</dbReference>
<dbReference type="AGR" id="WB:WBGene00011072"/>
<dbReference type="CTD" id="174660"/>
<dbReference type="WormBase" id="R06F6.11">
    <property type="protein sequence ID" value="CE01617"/>
    <property type="gene ID" value="WBGene00011072"/>
    <property type="gene designation" value="tag-209"/>
</dbReference>
<dbReference type="eggNOG" id="ENOG502TIPT">
    <property type="taxonomic scope" value="Eukaryota"/>
</dbReference>
<dbReference type="HOGENOM" id="CLU_2335498_0_0_1"/>
<dbReference type="InParanoid" id="Q09418"/>
<dbReference type="OMA" id="GAPADNH"/>
<dbReference type="OrthoDB" id="5819316at2759"/>
<dbReference type="PRO" id="PR:Q09418"/>
<dbReference type="Proteomes" id="UP000001940">
    <property type="component" value="Chromosome II"/>
</dbReference>
<dbReference type="Bgee" id="WBGene00011072">
    <property type="expression patterns" value="Expressed in larva and 3 other cell types or tissues"/>
</dbReference>
<reference key="1">
    <citation type="journal article" date="1998" name="Science">
        <title>Genome sequence of the nematode C. elegans: a platform for investigating biology.</title>
        <authorList>
            <consortium name="The C. elegans sequencing consortium"/>
        </authorList>
    </citation>
    <scope>NUCLEOTIDE SEQUENCE [LARGE SCALE GENOMIC DNA]</scope>
    <source>
        <strain>Bristol N2</strain>
    </source>
</reference>
<feature type="signal peptide" evidence="1">
    <location>
        <begin position="1"/>
        <end position="16"/>
    </location>
</feature>
<feature type="chain" id="PRO_0000014295" description="Putative protein tag-209">
    <location>
        <begin position="17"/>
        <end position="99"/>
    </location>
</feature>
<organism>
    <name type="scientific">Caenorhabditis elegans</name>
    <dbReference type="NCBI Taxonomy" id="6239"/>
    <lineage>
        <taxon>Eukaryota</taxon>
        <taxon>Metazoa</taxon>
        <taxon>Ecdysozoa</taxon>
        <taxon>Nematoda</taxon>
        <taxon>Chromadorea</taxon>
        <taxon>Rhabditida</taxon>
        <taxon>Rhabditina</taxon>
        <taxon>Rhabditomorpha</taxon>
        <taxon>Rhabditoidea</taxon>
        <taxon>Rhabditidae</taxon>
        <taxon>Peloderinae</taxon>
        <taxon>Caenorhabditis</taxon>
    </lineage>
</organism>
<proteinExistence type="inferred from homology"/>
<name>TG209_CAEEL</name>
<accession>Q09418</accession>
<protein>
    <recommendedName>
        <fullName>Putative protein tag-209</fullName>
    </recommendedName>
</protein>